<protein>
    <recommendedName>
        <fullName evidence="1">Ribosomal RNA large subunit methyltransferase H</fullName>
        <ecNumber evidence="1">2.1.1.177</ecNumber>
    </recommendedName>
    <alternativeName>
        <fullName evidence="1">23S rRNA (pseudouridine1915-N3)-methyltransferase</fullName>
    </alternativeName>
    <alternativeName>
        <fullName evidence="1">23S rRNA m3Psi1915 methyltransferase</fullName>
    </alternativeName>
    <alternativeName>
        <fullName evidence="1">rRNA (pseudouridine-N3-)-methyltransferase RlmH</fullName>
    </alternativeName>
</protein>
<reference key="1">
    <citation type="journal article" date="2006" name="Proc. Natl. Acad. Sci. U.S.A.">
        <title>Comparative genomics of the lactic acid bacteria.</title>
        <authorList>
            <person name="Makarova K.S."/>
            <person name="Slesarev A."/>
            <person name="Wolf Y.I."/>
            <person name="Sorokin A."/>
            <person name="Mirkin B."/>
            <person name="Koonin E.V."/>
            <person name="Pavlov A."/>
            <person name="Pavlova N."/>
            <person name="Karamychev V."/>
            <person name="Polouchine N."/>
            <person name="Shakhova V."/>
            <person name="Grigoriev I."/>
            <person name="Lou Y."/>
            <person name="Rohksar D."/>
            <person name="Lucas S."/>
            <person name="Huang K."/>
            <person name="Goodstein D.M."/>
            <person name="Hawkins T."/>
            <person name="Plengvidhya V."/>
            <person name="Welker D."/>
            <person name="Hughes J."/>
            <person name="Goh Y."/>
            <person name="Benson A."/>
            <person name="Baldwin K."/>
            <person name="Lee J.-H."/>
            <person name="Diaz-Muniz I."/>
            <person name="Dosti B."/>
            <person name="Smeianov V."/>
            <person name="Wechter W."/>
            <person name="Barabote R."/>
            <person name="Lorca G."/>
            <person name="Altermann E."/>
            <person name="Barrangou R."/>
            <person name="Ganesan B."/>
            <person name="Xie Y."/>
            <person name="Rawsthorne H."/>
            <person name="Tamir D."/>
            <person name="Parker C."/>
            <person name="Breidt F."/>
            <person name="Broadbent J.R."/>
            <person name="Hutkins R."/>
            <person name="O'Sullivan D."/>
            <person name="Steele J."/>
            <person name="Unlu G."/>
            <person name="Saier M.H. Jr."/>
            <person name="Klaenhammer T."/>
            <person name="Richardson P."/>
            <person name="Kozyavkin S."/>
            <person name="Weimer B.C."/>
            <person name="Mills D.A."/>
        </authorList>
    </citation>
    <scope>NUCLEOTIDE SEQUENCE [LARGE SCALE GENOMIC DNA]</scope>
    <source>
        <strain>SK11</strain>
    </source>
</reference>
<name>RLMH_LACLS</name>
<gene>
    <name evidence="1" type="primary">rlmH</name>
    <name type="ordered locus">LACR_2438</name>
</gene>
<evidence type="ECO:0000255" key="1">
    <source>
        <dbReference type="HAMAP-Rule" id="MF_00658"/>
    </source>
</evidence>
<keyword id="KW-0963">Cytoplasm</keyword>
<keyword id="KW-0489">Methyltransferase</keyword>
<keyword id="KW-0698">rRNA processing</keyword>
<keyword id="KW-0949">S-adenosyl-L-methionine</keyword>
<keyword id="KW-0808">Transferase</keyword>
<accession>Q02VZ1</accession>
<sequence length="159" mass="17855">MKIKLVVVGKLKEKYLKDGIAEYVKRMGTMLPLEIIELADEKIPDNASEKEAEALKKREGDKILSRIQTGDKLAILAIQGKLMSSEELADFVKKAEVYGTGNLVFVIGGSLGLSDEVYKRSDLQISFGRMTLPHQLMRLVLVEQIYRAQMINRGSAYHK</sequence>
<organism>
    <name type="scientific">Lactococcus lactis subsp. cremoris (strain SK11)</name>
    <dbReference type="NCBI Taxonomy" id="272622"/>
    <lineage>
        <taxon>Bacteria</taxon>
        <taxon>Bacillati</taxon>
        <taxon>Bacillota</taxon>
        <taxon>Bacilli</taxon>
        <taxon>Lactobacillales</taxon>
        <taxon>Streptococcaceae</taxon>
        <taxon>Lactococcus</taxon>
        <taxon>Lactococcus cremoris subsp. cremoris</taxon>
    </lineage>
</organism>
<feature type="chain" id="PRO_1000061798" description="Ribosomal RNA large subunit methyltransferase H">
    <location>
        <begin position="1"/>
        <end position="159"/>
    </location>
</feature>
<feature type="binding site" evidence="1">
    <location>
        <position position="76"/>
    </location>
    <ligand>
        <name>S-adenosyl-L-methionine</name>
        <dbReference type="ChEBI" id="CHEBI:59789"/>
    </ligand>
</feature>
<feature type="binding site" evidence="1">
    <location>
        <position position="108"/>
    </location>
    <ligand>
        <name>S-adenosyl-L-methionine</name>
        <dbReference type="ChEBI" id="CHEBI:59789"/>
    </ligand>
</feature>
<feature type="binding site" evidence="1">
    <location>
        <begin position="127"/>
        <end position="132"/>
    </location>
    <ligand>
        <name>S-adenosyl-L-methionine</name>
        <dbReference type="ChEBI" id="CHEBI:59789"/>
    </ligand>
</feature>
<comment type="function">
    <text evidence="1">Specifically methylates the pseudouridine at position 1915 (m3Psi1915) in 23S rRNA.</text>
</comment>
<comment type="catalytic activity">
    <reaction evidence="1">
        <text>pseudouridine(1915) in 23S rRNA + S-adenosyl-L-methionine = N(3)-methylpseudouridine(1915) in 23S rRNA + S-adenosyl-L-homocysteine + H(+)</text>
        <dbReference type="Rhea" id="RHEA:42752"/>
        <dbReference type="Rhea" id="RHEA-COMP:10221"/>
        <dbReference type="Rhea" id="RHEA-COMP:10222"/>
        <dbReference type="ChEBI" id="CHEBI:15378"/>
        <dbReference type="ChEBI" id="CHEBI:57856"/>
        <dbReference type="ChEBI" id="CHEBI:59789"/>
        <dbReference type="ChEBI" id="CHEBI:65314"/>
        <dbReference type="ChEBI" id="CHEBI:74486"/>
        <dbReference type="EC" id="2.1.1.177"/>
    </reaction>
</comment>
<comment type="subunit">
    <text evidence="1">Homodimer.</text>
</comment>
<comment type="subcellular location">
    <subcellularLocation>
        <location evidence="1">Cytoplasm</location>
    </subcellularLocation>
</comment>
<comment type="similarity">
    <text evidence="1">Belongs to the RNA methyltransferase RlmH family.</text>
</comment>
<proteinExistence type="inferred from homology"/>
<dbReference type="EC" id="2.1.1.177" evidence="1"/>
<dbReference type="EMBL" id="CP000425">
    <property type="protein sequence ID" value="ABJ73881.1"/>
    <property type="molecule type" value="Genomic_DNA"/>
</dbReference>
<dbReference type="RefSeq" id="WP_011677194.1">
    <property type="nucleotide sequence ID" value="NC_008527.1"/>
</dbReference>
<dbReference type="SMR" id="Q02VZ1"/>
<dbReference type="KEGG" id="llc:LACR_2438"/>
<dbReference type="HOGENOM" id="CLU_100552_0_0_9"/>
<dbReference type="Proteomes" id="UP000000240">
    <property type="component" value="Chromosome"/>
</dbReference>
<dbReference type="GO" id="GO:0005737">
    <property type="term" value="C:cytoplasm"/>
    <property type="evidence" value="ECO:0007669"/>
    <property type="project" value="UniProtKB-SubCell"/>
</dbReference>
<dbReference type="GO" id="GO:0070038">
    <property type="term" value="F:rRNA (pseudouridine-N3-)-methyltransferase activity"/>
    <property type="evidence" value="ECO:0007669"/>
    <property type="project" value="UniProtKB-UniRule"/>
</dbReference>
<dbReference type="CDD" id="cd18081">
    <property type="entry name" value="RlmH-like"/>
    <property type="match status" value="1"/>
</dbReference>
<dbReference type="Gene3D" id="3.40.1280.10">
    <property type="match status" value="1"/>
</dbReference>
<dbReference type="HAMAP" id="MF_00658">
    <property type="entry name" value="23SrRNA_methyltr_H"/>
    <property type="match status" value="1"/>
</dbReference>
<dbReference type="InterPro" id="IPR029028">
    <property type="entry name" value="Alpha/beta_knot_MTases"/>
</dbReference>
<dbReference type="InterPro" id="IPR003742">
    <property type="entry name" value="RlmH-like"/>
</dbReference>
<dbReference type="InterPro" id="IPR029026">
    <property type="entry name" value="tRNA_m1G_MTases_N"/>
</dbReference>
<dbReference type="NCBIfam" id="NF000985">
    <property type="entry name" value="PRK00103.1-3"/>
    <property type="match status" value="1"/>
</dbReference>
<dbReference type="NCBIfam" id="TIGR00246">
    <property type="entry name" value="tRNA_RlmH_YbeA"/>
    <property type="match status" value="1"/>
</dbReference>
<dbReference type="PANTHER" id="PTHR33603">
    <property type="entry name" value="METHYLTRANSFERASE"/>
    <property type="match status" value="1"/>
</dbReference>
<dbReference type="PANTHER" id="PTHR33603:SF1">
    <property type="entry name" value="RIBOSOMAL RNA LARGE SUBUNIT METHYLTRANSFERASE H"/>
    <property type="match status" value="1"/>
</dbReference>
<dbReference type="Pfam" id="PF02590">
    <property type="entry name" value="SPOUT_MTase"/>
    <property type="match status" value="1"/>
</dbReference>
<dbReference type="PIRSF" id="PIRSF004505">
    <property type="entry name" value="MT_bac"/>
    <property type="match status" value="1"/>
</dbReference>
<dbReference type="SUPFAM" id="SSF75217">
    <property type="entry name" value="alpha/beta knot"/>
    <property type="match status" value="1"/>
</dbReference>